<gene>
    <name type="primary">rpl2701</name>
    <name type="synonym">rpl27a</name>
    <name type="ORF">SPBC685.07c</name>
</gene>
<evidence type="ECO:0000250" key="1">
    <source>
        <dbReference type="UniProtKB" id="P0C2H6"/>
    </source>
</evidence>
<evidence type="ECO:0000269" key="2">
    <source>
    </source>
</evidence>
<evidence type="ECO:0000305" key="3"/>
<evidence type="ECO:0007829" key="4">
    <source>
        <dbReference type="PDB" id="8ETC"/>
    </source>
</evidence>
<evidence type="ECO:0007829" key="5">
    <source>
        <dbReference type="PDB" id="8ETG"/>
    </source>
</evidence>
<accession>O14388</accession>
<accession>O74167</accession>
<comment type="function">
    <text evidence="1">Component of the ribosome, a large ribonucleoprotein complex responsible for the synthesis of proteins in the cell. The small ribosomal subunit (SSU) binds messenger RNAs (mRNAs) and translates the encoded message by selecting cognate aminoacyl-transfer RNA (tRNA) molecules. The large subunit (LSU) contains the ribosomal catalytic site termed the peptidyl transferase center (PTC), which catalyzes the formation of peptide bonds, thereby polymerizing the amino acids delivered by tRNAs into a polypeptide chain. The nascent polypeptides leave the ribosome through a tunnel in the LSU and interact with protein factors that function in enzymatic processing, targeting, and the membrane insertion of nascent chains at the exit of the ribosomal tunnel.</text>
</comment>
<comment type="subunit">
    <text evidence="1">Component of the large ribosomal subunit (LSU). Mature yeast ribosomes consist of a small (40S) and a large (60S) subunit. The 40S small subunit contains 1 molecule of ribosomal RNA (18S rRNA) and at least 33 different proteins. The large 60S subunit contains 3 rRNA molecules (25S, 5.8S and 5S rRNA) and at least 46 different proteins.</text>
</comment>
<comment type="subcellular location">
    <subcellularLocation>
        <location evidence="2">Cytoplasm</location>
    </subcellularLocation>
    <subcellularLocation>
        <location evidence="2">Nucleus</location>
    </subcellularLocation>
</comment>
<comment type="miscellaneous">
    <text>There are 2 genes for eL27 in S.pombe.</text>
</comment>
<comment type="similarity">
    <text evidence="3">Belongs to the eukaryotic ribosomal protein eL27 family.</text>
</comment>
<proteinExistence type="evidence at protein level"/>
<sequence>MVKILKPGKVALITRGRFAGKKVVILQAIDQGSKSHPFGHAVVAGVERYPLKVTKSMGAKRIARRSRVKPFIKVVNYNHLMPTRYALELDNLKGLITADTFKEPTQRSAARKTVKKTFEEKYQSGKSAWFFTPLRF</sequence>
<feature type="chain" id="PRO_0000126090" description="Large ribosomal subunit protein eL27A">
    <location>
        <begin position="1"/>
        <end position="136"/>
    </location>
</feature>
<feature type="sequence conflict" description="In Ref. 3." evidence="3" ref="3">
    <original>ILK</original>
    <variation>GTR</variation>
    <location>
        <begin position="4"/>
        <end position="6"/>
    </location>
</feature>
<feature type="strand" evidence="4">
    <location>
        <begin position="9"/>
        <end position="13"/>
    </location>
</feature>
<feature type="turn" evidence="4">
    <location>
        <begin position="17"/>
        <end position="20"/>
    </location>
</feature>
<feature type="strand" evidence="4">
    <location>
        <begin position="22"/>
        <end position="29"/>
    </location>
</feature>
<feature type="strand" evidence="4">
    <location>
        <begin position="40"/>
        <end position="48"/>
    </location>
</feature>
<feature type="strand" evidence="4">
    <location>
        <begin position="55"/>
        <end position="57"/>
    </location>
</feature>
<feature type="helix" evidence="4">
    <location>
        <begin position="59"/>
        <end position="66"/>
    </location>
</feature>
<feature type="strand" evidence="4">
    <location>
        <begin position="69"/>
        <end position="75"/>
    </location>
</feature>
<feature type="turn" evidence="4">
    <location>
        <begin position="77"/>
        <end position="79"/>
    </location>
</feature>
<feature type="strand" evidence="4">
    <location>
        <begin position="80"/>
        <end position="86"/>
    </location>
</feature>
<feature type="helix" evidence="5">
    <location>
        <begin position="90"/>
        <end position="92"/>
    </location>
</feature>
<feature type="helix" evidence="4">
    <location>
        <begin position="98"/>
        <end position="102"/>
    </location>
</feature>
<feature type="helix" evidence="4">
    <location>
        <begin position="104"/>
        <end position="124"/>
    </location>
</feature>
<feature type="helix" evidence="4">
    <location>
        <begin position="128"/>
        <end position="131"/>
    </location>
</feature>
<reference key="1">
    <citation type="journal article" date="2002" name="Nature">
        <title>The genome sequence of Schizosaccharomyces pombe.</title>
        <authorList>
            <person name="Wood V."/>
            <person name="Gwilliam R."/>
            <person name="Rajandream M.A."/>
            <person name="Lyne M.H."/>
            <person name="Lyne R."/>
            <person name="Stewart A."/>
            <person name="Sgouros J.G."/>
            <person name="Peat N."/>
            <person name="Hayles J."/>
            <person name="Baker S.G."/>
            <person name="Basham D."/>
            <person name="Bowman S."/>
            <person name="Brooks K."/>
            <person name="Brown D."/>
            <person name="Brown S."/>
            <person name="Chillingworth T."/>
            <person name="Churcher C.M."/>
            <person name="Collins M."/>
            <person name="Connor R."/>
            <person name="Cronin A."/>
            <person name="Davis P."/>
            <person name="Feltwell T."/>
            <person name="Fraser A."/>
            <person name="Gentles S."/>
            <person name="Goble A."/>
            <person name="Hamlin N."/>
            <person name="Harris D.E."/>
            <person name="Hidalgo J."/>
            <person name="Hodgson G."/>
            <person name="Holroyd S."/>
            <person name="Hornsby T."/>
            <person name="Howarth S."/>
            <person name="Huckle E.J."/>
            <person name="Hunt S."/>
            <person name="Jagels K."/>
            <person name="James K.D."/>
            <person name="Jones L."/>
            <person name="Jones M."/>
            <person name="Leather S."/>
            <person name="McDonald S."/>
            <person name="McLean J."/>
            <person name="Mooney P."/>
            <person name="Moule S."/>
            <person name="Mungall K.L."/>
            <person name="Murphy L.D."/>
            <person name="Niblett D."/>
            <person name="Odell C."/>
            <person name="Oliver K."/>
            <person name="O'Neil S."/>
            <person name="Pearson D."/>
            <person name="Quail M.A."/>
            <person name="Rabbinowitsch E."/>
            <person name="Rutherford K.M."/>
            <person name="Rutter S."/>
            <person name="Saunders D."/>
            <person name="Seeger K."/>
            <person name="Sharp S."/>
            <person name="Skelton J."/>
            <person name="Simmonds M.N."/>
            <person name="Squares R."/>
            <person name="Squares S."/>
            <person name="Stevens K."/>
            <person name="Taylor K."/>
            <person name="Taylor R.G."/>
            <person name="Tivey A."/>
            <person name="Walsh S.V."/>
            <person name="Warren T."/>
            <person name="Whitehead S."/>
            <person name="Woodward J.R."/>
            <person name="Volckaert G."/>
            <person name="Aert R."/>
            <person name="Robben J."/>
            <person name="Grymonprez B."/>
            <person name="Weltjens I."/>
            <person name="Vanstreels E."/>
            <person name="Rieger M."/>
            <person name="Schaefer M."/>
            <person name="Mueller-Auer S."/>
            <person name="Gabel C."/>
            <person name="Fuchs M."/>
            <person name="Duesterhoeft A."/>
            <person name="Fritzc C."/>
            <person name="Holzer E."/>
            <person name="Moestl D."/>
            <person name="Hilbert H."/>
            <person name="Borzym K."/>
            <person name="Langer I."/>
            <person name="Beck A."/>
            <person name="Lehrach H."/>
            <person name="Reinhardt R."/>
            <person name="Pohl T.M."/>
            <person name="Eger P."/>
            <person name="Zimmermann W."/>
            <person name="Wedler H."/>
            <person name="Wambutt R."/>
            <person name="Purnelle B."/>
            <person name="Goffeau A."/>
            <person name="Cadieu E."/>
            <person name="Dreano S."/>
            <person name="Gloux S."/>
            <person name="Lelaure V."/>
            <person name="Mottier S."/>
            <person name="Galibert F."/>
            <person name="Aves S.J."/>
            <person name="Xiang Z."/>
            <person name="Hunt C."/>
            <person name="Moore K."/>
            <person name="Hurst S.M."/>
            <person name="Lucas M."/>
            <person name="Rochet M."/>
            <person name="Gaillardin C."/>
            <person name="Tallada V.A."/>
            <person name="Garzon A."/>
            <person name="Thode G."/>
            <person name="Daga R.R."/>
            <person name="Cruzado L."/>
            <person name="Jimenez J."/>
            <person name="Sanchez M."/>
            <person name="del Rey F."/>
            <person name="Benito J."/>
            <person name="Dominguez A."/>
            <person name="Revuelta J.L."/>
            <person name="Moreno S."/>
            <person name="Armstrong J."/>
            <person name="Forsburg S.L."/>
            <person name="Cerutti L."/>
            <person name="Lowe T."/>
            <person name="McCombie W.R."/>
            <person name="Paulsen I."/>
            <person name="Potashkin J."/>
            <person name="Shpakovski G.V."/>
            <person name="Ussery D."/>
            <person name="Barrell B.G."/>
            <person name="Nurse P."/>
        </authorList>
    </citation>
    <scope>NUCLEOTIDE SEQUENCE [LARGE SCALE GENOMIC DNA]</scope>
    <source>
        <strain>972 / ATCC 24843</strain>
    </source>
</reference>
<reference key="2">
    <citation type="submission" date="1997-04" db="EMBL/GenBank/DDBJ databases">
        <authorList>
            <person name="Jang Y.-J."/>
            <person name="Yoo H.-S."/>
        </authorList>
    </citation>
    <scope>NUCLEOTIDE SEQUENCE [MRNA] OF 1-74</scope>
    <source>
        <strain>972 / ATCC 24843</strain>
    </source>
</reference>
<reference key="3">
    <citation type="submission" date="1998-06" db="EMBL/GenBank/DDBJ databases">
        <title>S.pombe ribosomal protein L27 homolog.</title>
        <authorList>
            <person name="Kawamukai M."/>
        </authorList>
    </citation>
    <scope>NUCLEOTIDE SEQUENCE [MRNA] OF 4-136</scope>
</reference>
<reference key="4">
    <citation type="journal article" date="2006" name="Nat. Biotechnol.">
        <title>ORFeome cloning and global analysis of protein localization in the fission yeast Schizosaccharomyces pombe.</title>
        <authorList>
            <person name="Matsuyama A."/>
            <person name="Arai R."/>
            <person name="Yashiroda Y."/>
            <person name="Shirai A."/>
            <person name="Kamata A."/>
            <person name="Sekido S."/>
            <person name="Kobayashi Y."/>
            <person name="Hashimoto A."/>
            <person name="Hamamoto M."/>
            <person name="Hiraoka Y."/>
            <person name="Horinouchi S."/>
            <person name="Yoshida M."/>
        </authorList>
    </citation>
    <scope>SUBCELLULAR LOCATION [LARGE SCALE ANALYSIS]</scope>
</reference>
<keyword id="KW-0002">3D-structure</keyword>
<keyword id="KW-0963">Cytoplasm</keyword>
<keyword id="KW-0539">Nucleus</keyword>
<keyword id="KW-1185">Reference proteome</keyword>
<keyword id="KW-0687">Ribonucleoprotein</keyword>
<keyword id="KW-0689">Ribosomal protein</keyword>
<name>RL27A_SCHPO</name>
<organism>
    <name type="scientific">Schizosaccharomyces pombe (strain 972 / ATCC 24843)</name>
    <name type="common">Fission yeast</name>
    <dbReference type="NCBI Taxonomy" id="284812"/>
    <lineage>
        <taxon>Eukaryota</taxon>
        <taxon>Fungi</taxon>
        <taxon>Dikarya</taxon>
        <taxon>Ascomycota</taxon>
        <taxon>Taphrinomycotina</taxon>
        <taxon>Schizosaccharomycetes</taxon>
        <taxon>Schizosaccharomycetales</taxon>
        <taxon>Schizosaccharomycetaceae</taxon>
        <taxon>Schizosaccharomyces</taxon>
    </lineage>
</organism>
<dbReference type="EMBL" id="CU329671">
    <property type="protein sequence ID" value="CAB39364.1"/>
    <property type="molecule type" value="Genomic_DNA"/>
</dbReference>
<dbReference type="EMBL" id="U97385">
    <property type="protein sequence ID" value="AAB63877.1"/>
    <property type="molecule type" value="mRNA"/>
</dbReference>
<dbReference type="EMBL" id="AB015354">
    <property type="protein sequence ID" value="BAA28849.1"/>
    <property type="molecule type" value="mRNA"/>
</dbReference>
<dbReference type="PIR" id="T40638">
    <property type="entry name" value="T40638"/>
</dbReference>
<dbReference type="PIR" id="T43374">
    <property type="entry name" value="T43374"/>
</dbReference>
<dbReference type="RefSeq" id="NP_596141.1">
    <property type="nucleotide sequence ID" value="NM_001022059.2"/>
</dbReference>
<dbReference type="PDB" id="8ESQ">
    <property type="method" value="EM"/>
    <property type="resolution" value="2.80 A"/>
    <property type="chains" value="Z=1-136"/>
</dbReference>
<dbReference type="PDB" id="8ESR">
    <property type="method" value="EM"/>
    <property type="resolution" value="3.20 A"/>
    <property type="chains" value="Z=1-136"/>
</dbReference>
<dbReference type="PDB" id="8ETC">
    <property type="method" value="EM"/>
    <property type="resolution" value="3.10 A"/>
    <property type="chains" value="Z=1-136"/>
</dbReference>
<dbReference type="PDB" id="8ETG">
    <property type="method" value="EM"/>
    <property type="resolution" value="3.40 A"/>
    <property type="chains" value="Z=1-136"/>
</dbReference>
<dbReference type="PDB" id="8EUG">
    <property type="method" value="EM"/>
    <property type="resolution" value="2.80 A"/>
    <property type="chains" value="Z=1-136"/>
</dbReference>
<dbReference type="PDB" id="8EUI">
    <property type="method" value="EM"/>
    <property type="resolution" value="3.10 A"/>
    <property type="chains" value="Z=1-136"/>
</dbReference>
<dbReference type="PDB" id="9AXT">
    <property type="method" value="EM"/>
    <property type="resolution" value="2.40 A"/>
    <property type="chains" value="Bl=1-136"/>
</dbReference>
<dbReference type="PDB" id="9AXU">
    <property type="method" value="EM"/>
    <property type="resolution" value="1.94 A"/>
    <property type="chains" value="l=1-136"/>
</dbReference>
<dbReference type="PDB" id="9AXV">
    <property type="method" value="EM"/>
    <property type="resolution" value="2.40 A"/>
    <property type="chains" value="Bl=1-136"/>
</dbReference>
<dbReference type="PDBsum" id="8ESQ"/>
<dbReference type="PDBsum" id="8ESR"/>
<dbReference type="PDBsum" id="8ETC"/>
<dbReference type="PDBsum" id="8ETG"/>
<dbReference type="PDBsum" id="8EUG"/>
<dbReference type="PDBsum" id="8EUI"/>
<dbReference type="PDBsum" id="9AXT"/>
<dbReference type="PDBsum" id="9AXU"/>
<dbReference type="PDBsum" id="9AXV"/>
<dbReference type="EMDB" id="EMD-43972"/>
<dbReference type="EMDB" id="EMD-43973"/>
<dbReference type="EMDB" id="EMD-43976"/>
<dbReference type="SMR" id="O14388"/>
<dbReference type="BioGRID" id="277671">
    <property type="interactions" value="78"/>
</dbReference>
<dbReference type="FunCoup" id="O14388">
    <property type="interactions" value="441"/>
</dbReference>
<dbReference type="STRING" id="284812.O14388"/>
<dbReference type="iPTMnet" id="O14388"/>
<dbReference type="PaxDb" id="4896-SPBC685.07c.1"/>
<dbReference type="EnsemblFungi" id="SPBC685.07c.1">
    <property type="protein sequence ID" value="SPBC685.07c.1:pep"/>
    <property type="gene ID" value="SPBC685.07c"/>
</dbReference>
<dbReference type="GeneID" id="2541156"/>
<dbReference type="KEGG" id="spo:2541156"/>
<dbReference type="PomBase" id="SPBC685.07c">
    <property type="gene designation" value="rpl2701"/>
</dbReference>
<dbReference type="VEuPathDB" id="FungiDB:SPBC685.07c"/>
<dbReference type="eggNOG" id="KOG3418">
    <property type="taxonomic scope" value="Eukaryota"/>
</dbReference>
<dbReference type="HOGENOM" id="CLU_067359_0_1_1"/>
<dbReference type="InParanoid" id="O14388"/>
<dbReference type="OMA" id="NQWFFTK"/>
<dbReference type="PhylomeDB" id="O14388"/>
<dbReference type="PRO" id="PR:O14388"/>
<dbReference type="Proteomes" id="UP000002485">
    <property type="component" value="Chromosome II"/>
</dbReference>
<dbReference type="GO" id="GO:0005829">
    <property type="term" value="C:cytosol"/>
    <property type="evidence" value="ECO:0007005"/>
    <property type="project" value="PomBase"/>
</dbReference>
<dbReference type="GO" id="GO:0022625">
    <property type="term" value="C:cytosolic large ribosomal subunit"/>
    <property type="evidence" value="ECO:0000269"/>
    <property type="project" value="PomBase"/>
</dbReference>
<dbReference type="GO" id="GO:0005634">
    <property type="term" value="C:nucleus"/>
    <property type="evidence" value="ECO:0007005"/>
    <property type="project" value="PomBase"/>
</dbReference>
<dbReference type="GO" id="GO:0030684">
    <property type="term" value="C:preribosome"/>
    <property type="evidence" value="ECO:0000314"/>
    <property type="project" value="PomBase"/>
</dbReference>
<dbReference type="GO" id="GO:0003735">
    <property type="term" value="F:structural constituent of ribosome"/>
    <property type="evidence" value="ECO:0000318"/>
    <property type="project" value="GO_Central"/>
</dbReference>
<dbReference type="GO" id="GO:0002181">
    <property type="term" value="P:cytoplasmic translation"/>
    <property type="evidence" value="ECO:0000266"/>
    <property type="project" value="PomBase"/>
</dbReference>
<dbReference type="CDD" id="cd06090">
    <property type="entry name" value="KOW_RPL27"/>
    <property type="match status" value="1"/>
</dbReference>
<dbReference type="FunFam" id="2.30.30.770:FF:000001">
    <property type="entry name" value="60S ribosomal protein L27"/>
    <property type="match status" value="1"/>
</dbReference>
<dbReference type="Gene3D" id="2.30.30.770">
    <property type="match status" value="1"/>
</dbReference>
<dbReference type="InterPro" id="IPR005824">
    <property type="entry name" value="KOW"/>
</dbReference>
<dbReference type="InterPro" id="IPR001141">
    <property type="entry name" value="Ribosomal_eL27"/>
</dbReference>
<dbReference type="InterPro" id="IPR018262">
    <property type="entry name" value="Ribosomal_eL27_CS"/>
</dbReference>
<dbReference type="InterPro" id="IPR041991">
    <property type="entry name" value="Ribosomal_eL27_KOW"/>
</dbReference>
<dbReference type="InterPro" id="IPR038655">
    <property type="entry name" value="Ribosomal_eL27_sf"/>
</dbReference>
<dbReference type="InterPro" id="IPR008991">
    <property type="entry name" value="Translation_prot_SH3-like_sf"/>
</dbReference>
<dbReference type="PANTHER" id="PTHR10497">
    <property type="entry name" value="60S RIBOSOMAL PROTEIN L27"/>
    <property type="match status" value="1"/>
</dbReference>
<dbReference type="Pfam" id="PF00467">
    <property type="entry name" value="KOW"/>
    <property type="match status" value="1"/>
</dbReference>
<dbReference type="Pfam" id="PF01777">
    <property type="entry name" value="Ribosomal_L27e"/>
    <property type="match status" value="1"/>
</dbReference>
<dbReference type="SUPFAM" id="SSF50104">
    <property type="entry name" value="Translation proteins SH3-like domain"/>
    <property type="match status" value="1"/>
</dbReference>
<dbReference type="PROSITE" id="PS01107">
    <property type="entry name" value="RIBOSOMAL_L27E"/>
    <property type="match status" value="1"/>
</dbReference>
<protein>
    <recommendedName>
        <fullName evidence="3">Large ribosomal subunit protein eL27A</fullName>
    </recommendedName>
    <alternativeName>
        <fullName>60S ribosomal protein L27-A</fullName>
    </alternativeName>
</protein>